<evidence type="ECO:0000250" key="1"/>
<evidence type="ECO:0000305" key="2"/>
<comment type="function">
    <text evidence="1">One of the primary rRNA binding proteins, it binds directly to 18S rRNA where it nucleates assembly of the head domain of the small subunit.</text>
</comment>
<comment type="subunit">
    <text>Part of the small ribosomal subunit.</text>
</comment>
<comment type="subcellular location">
    <subcellularLocation>
        <location>Mitochondrion</location>
    </subcellularLocation>
</comment>
<comment type="similarity">
    <text evidence="2">Belongs to the universal ribosomal protein uS7 family.</text>
</comment>
<accession>Q01902</accession>
<protein>
    <recommendedName>
        <fullName evidence="2">Small ribosomal subunit protein uS7m</fullName>
    </recommendedName>
    <alternativeName>
        <fullName>Ribosomal protein S7, mitochondrial</fullName>
    </alternativeName>
</protein>
<geneLocation type="mitochondrion"/>
<name>RT07_WHEAT</name>
<gene>
    <name type="primary">RPS7</name>
</gene>
<keyword id="KW-0496">Mitochondrion</keyword>
<keyword id="KW-1185">Reference proteome</keyword>
<keyword id="KW-0687">Ribonucleoprotein</keyword>
<keyword id="KW-0689">Ribosomal protein</keyword>
<keyword id="KW-0694">RNA-binding</keyword>
<keyword id="KW-0699">rRNA-binding</keyword>
<feature type="chain" id="PRO_0000124523" description="Small ribosomal subunit protein uS7m">
    <location>
        <begin position="1"/>
        <end position="148"/>
    </location>
</feature>
<proteinExistence type="inferred from homology"/>
<sequence length="148" mass="17308">MGDFDGEQKELIKKLVNFRMIDGKRTRVRAIVYKTFHRLARTERDVIKLMVDAVDNIKPICEVVKVGVAGTIYDVPGIVARDRQQTLAIRWILGAAFKRRISYRISLEKCSFAEILDAYRKRGISRKRRENLHGLASTNRSFAHFRWW</sequence>
<dbReference type="EMBL" id="X67242">
    <property type="protein sequence ID" value="CAA47667.1"/>
    <property type="molecule type" value="Genomic_DNA"/>
</dbReference>
<dbReference type="PIR" id="S34782">
    <property type="entry name" value="S34782"/>
</dbReference>
<dbReference type="RefSeq" id="YP_398426.1">
    <property type="nucleotide sequence ID" value="NC_007579.1"/>
</dbReference>
<dbReference type="SMR" id="Q01902"/>
<dbReference type="PaxDb" id="4565-EPlTAEP00000010080"/>
<dbReference type="EnsemblPlants" id="TraesARI1B03G00406450.1">
    <property type="protein sequence ID" value="TraesARI1B03G00406450.1.CDS1"/>
    <property type="gene ID" value="TraesARI1B03G00406450"/>
</dbReference>
<dbReference type="EnsemblPlants" id="TraesARI3B03G01635580.1">
    <property type="protein sequence ID" value="TraesARI3B03G01635580.1.CDS1"/>
    <property type="gene ID" value="TraesARI3B03G01635580"/>
</dbReference>
<dbReference type="EnsemblPlants" id="TraesJAG1B03G00402470.1">
    <property type="protein sequence ID" value="TraesJAG1B03G00402470.1.CDS1"/>
    <property type="gene ID" value="TraesJAG1B03G00402470"/>
</dbReference>
<dbReference type="EnsemblPlants" id="TraesJAG2A03G00741750.1">
    <property type="protein sequence ID" value="TraesJAG2A03G00741750.1.CDS1"/>
    <property type="gene ID" value="TraesJAG2A03G00741750"/>
</dbReference>
<dbReference type="EnsemblPlants" id="TraesJAG3B03G01617270.1">
    <property type="protein sequence ID" value="TraesJAG3B03G01617270.1.CDS1"/>
    <property type="gene ID" value="TraesJAG3B03G01617270"/>
</dbReference>
<dbReference type="EnsemblPlants" id="TraesJUL1B03G00404010.1">
    <property type="protein sequence ID" value="TraesJUL1B03G00404010.1.CDS1"/>
    <property type="gene ID" value="TraesJUL1B03G00404010"/>
</dbReference>
<dbReference type="EnsemblPlants" id="TraesJUL2A03G00746560.1">
    <property type="protein sequence ID" value="TraesJUL2A03G00746560.1.CDS1"/>
    <property type="gene ID" value="TraesJUL2A03G00746560"/>
</dbReference>
<dbReference type="EnsemblPlants" id="TraesJUL2B03G00847460.1">
    <property type="protein sequence ID" value="TraesJUL2B03G00847460.1.CDS1"/>
    <property type="gene ID" value="TraesJUL2B03G00847460"/>
</dbReference>
<dbReference type="EnsemblPlants" id="TraesJUL3B03G01621330.1">
    <property type="protein sequence ID" value="TraesJUL3B03G01621330.1.CDS1"/>
    <property type="gene ID" value="TraesJUL3B03G01621330"/>
</dbReference>
<dbReference type="EnsemblPlants" id="TraesJUL4D03G02476900.1">
    <property type="protein sequence ID" value="TraesJUL4D03G02476900.1.CDS1"/>
    <property type="gene ID" value="TraesJUL4D03G02476900"/>
</dbReference>
<dbReference type="EnsemblPlants" id="TraesJUL4D03G02476920.1">
    <property type="protein sequence ID" value="TraesJUL4D03G02476920.1.CDS1"/>
    <property type="gene ID" value="TraesJUL4D03G02476920"/>
</dbReference>
<dbReference type="EnsemblPlants" id="TraesJUL5D03G03259720.1">
    <property type="protein sequence ID" value="TraesJUL5D03G03259720.1.CDS1"/>
    <property type="gene ID" value="TraesJUL5D03G03259720"/>
</dbReference>
<dbReference type="EnsemblPlants" id="TraesJUL6A03G03293580.1">
    <property type="protein sequence ID" value="TraesJUL6A03G03293580.1.CDS1"/>
    <property type="gene ID" value="TraesJUL6A03G03293580"/>
</dbReference>
<dbReference type="EnsemblPlants" id="TraesJUL7A03G03842350.1">
    <property type="protein sequence ID" value="TraesJUL7A03G03842350.1.CDS1"/>
    <property type="gene ID" value="TraesJUL7A03G03842350"/>
</dbReference>
<dbReference type="EnsemblPlants" id="TraesKAR1A01G0040360.1">
    <property type="protein sequence ID" value="cds.TraesKAR1A01G0040360.1"/>
    <property type="gene ID" value="TraesKAR1A01G0040360"/>
</dbReference>
<dbReference type="EnsemblPlants" id="TraesKAR1A01G0040410.1">
    <property type="protein sequence ID" value="cds.TraesKAR1A01G0040410.1"/>
    <property type="gene ID" value="TraesKAR1A01G0040410"/>
</dbReference>
<dbReference type="EnsemblPlants" id="TraesKAR1B01G0452290.1">
    <property type="protein sequence ID" value="cds.TraesKAR1B01G0452290.1"/>
    <property type="gene ID" value="TraesKAR1B01G0452290"/>
</dbReference>
<dbReference type="EnsemblPlants" id="TraesKAR1B01G0460400.1">
    <property type="protein sequence ID" value="cds.TraesKAR1B01G0460400.1"/>
    <property type="gene ID" value="TraesKAR1B01G0460400"/>
</dbReference>
<dbReference type="EnsemblPlants" id="TraesKAR3B01G0143870.1">
    <property type="protein sequence ID" value="cds.TraesKAR3B01G0143870.1"/>
    <property type="gene ID" value="TraesKAR3B01G0143870"/>
</dbReference>
<dbReference type="EnsemblPlants" id="TraesKAR4D01G0091690.1">
    <property type="protein sequence ID" value="cds.TraesKAR4D01G0091690.1"/>
    <property type="gene ID" value="TraesKAR4D01G0091690"/>
</dbReference>
<dbReference type="EnsemblPlants" id="TraesKAR5B01G0349100.1">
    <property type="protein sequence ID" value="cds.TraesKAR5B01G0349100.1"/>
    <property type="gene ID" value="TraesKAR5B01G0349100"/>
</dbReference>
<dbReference type="EnsemblPlants" id="TraesKAR5D01G0413780.1">
    <property type="protein sequence ID" value="cds.TraesKAR5D01G0413780.1"/>
    <property type="gene ID" value="TraesKAR5D01G0413780"/>
</dbReference>
<dbReference type="EnsemblPlants" id="TraesKAR6A01G0335690.1">
    <property type="protein sequence ID" value="cds.TraesKAR6A01G0335690.1"/>
    <property type="gene ID" value="TraesKAR6A01G0335690"/>
</dbReference>
<dbReference type="EnsemblPlants" id="TraesKARUn01G0024160.1">
    <property type="protein sequence ID" value="cds.TraesKARUn01G0024160.1"/>
    <property type="gene ID" value="TraesKARUn01G0024160"/>
</dbReference>
<dbReference type="EnsemblPlants" id="TraesKARUn01G0024280.1">
    <property type="protein sequence ID" value="cds.TraesKARUn01G0024280.1"/>
    <property type="gene ID" value="TraesKARUn01G0024280"/>
</dbReference>
<dbReference type="EnsemblPlants" id="TraesKARUn01G0024300.1">
    <property type="protein sequence ID" value="cds.TraesKARUn01G0024300.1"/>
    <property type="gene ID" value="TraesKARUn01G0024300"/>
</dbReference>
<dbReference type="EnsemblPlants" id="TraesKARUn01G0030920.1">
    <property type="protein sequence ID" value="cds.TraesKARUn01G0030920.1"/>
    <property type="gene ID" value="TraesKARUn01G0030920"/>
</dbReference>
<dbReference type="EnsemblPlants" id="TraesKARUn01G0065280.1">
    <property type="protein sequence ID" value="cds.TraesKARUn01G0065280.1"/>
    <property type="gene ID" value="TraesKARUn01G0065280"/>
</dbReference>
<dbReference type="EnsemblPlants" id="TraesKARUn01G0065950.1">
    <property type="protein sequence ID" value="cds.TraesKARUn01G0065950.1"/>
    <property type="gene ID" value="TraesKARUn01G0065950"/>
</dbReference>
<dbReference type="EnsemblPlants" id="TraesKARUn01G0067820.1">
    <property type="protein sequence ID" value="cds.TraesKARUn01G0067820.1"/>
    <property type="gene ID" value="TraesKARUn01G0067820"/>
</dbReference>
<dbReference type="EnsemblPlants" id="TraesKARUn01G0099010.1">
    <property type="protein sequence ID" value="cds.TraesKARUn01G0099010.1"/>
    <property type="gene ID" value="TraesKARUn01G0099010"/>
</dbReference>
<dbReference type="EnsemblPlants" id="TraesKARUn01G0100230.1">
    <property type="protein sequence ID" value="cds.TraesKARUn01G0100230.1"/>
    <property type="gene ID" value="TraesKARUn01G0100230"/>
</dbReference>
<dbReference type="EnsemblPlants" id="TraesKARUn01G0100720.1">
    <property type="protein sequence ID" value="cds.TraesKARUn01G0100720.1"/>
    <property type="gene ID" value="TraesKARUn01G0100720"/>
</dbReference>
<dbReference type="EnsemblPlants" id="TraesKARUn01G0120770.1">
    <property type="protein sequence ID" value="cds.TraesKARUn01G0120770.1"/>
    <property type="gene ID" value="TraesKARUn01G0120770"/>
</dbReference>
<dbReference type="EnsemblPlants" id="TraesKARUn01G0127670.1">
    <property type="protein sequence ID" value="cds.TraesKARUn01G0127670.1"/>
    <property type="gene ID" value="TraesKARUn01G0127670"/>
</dbReference>
<dbReference type="EnsemblPlants" id="TraesKARUn01G0130850.1">
    <property type="protein sequence ID" value="cds.TraesKARUn01G0130850.1"/>
    <property type="gene ID" value="TraesKARUn01G0130850"/>
</dbReference>
<dbReference type="EnsemblPlants" id="TraesKARUn01G0133990.1">
    <property type="protein sequence ID" value="cds.TraesKARUn01G0133990.1"/>
    <property type="gene ID" value="TraesKARUn01G0133990"/>
</dbReference>
<dbReference type="EnsemblPlants" id="TraesKARUn01G0141340.1">
    <property type="protein sequence ID" value="cds.TraesKARUn01G0141340.1"/>
    <property type="gene ID" value="TraesKARUn01G0141340"/>
</dbReference>
<dbReference type="EnsemblPlants" id="TraesKARUn01G0151270.1">
    <property type="protein sequence ID" value="cds.TraesKARUn01G0151270.1"/>
    <property type="gene ID" value="TraesKARUn01G0151270"/>
</dbReference>
<dbReference type="EnsemblPlants" id="TraesKARUn01G0151550.1">
    <property type="protein sequence ID" value="cds.TraesKARUn01G0151550.1"/>
    <property type="gene ID" value="TraesKARUn01G0151550"/>
</dbReference>
<dbReference type="EnsemblPlants" id="TraesKARUn01G0188240.1">
    <property type="protein sequence ID" value="cds.TraesKARUn01G0188240.1"/>
    <property type="gene ID" value="TraesKARUn01G0188240"/>
</dbReference>
<dbReference type="EnsemblPlants" id="TraesLAC1B03G00402760.1">
    <property type="protein sequence ID" value="TraesLAC1B03G00402760.1.CDS1"/>
    <property type="gene ID" value="TraesLAC1B03G00402760"/>
</dbReference>
<dbReference type="EnsemblPlants" id="TraesLAC1B03G00404600.1">
    <property type="protein sequence ID" value="TraesLAC1B03G00404600.1.CDS1"/>
    <property type="gene ID" value="TraesLAC1B03G00404600"/>
</dbReference>
<dbReference type="EnsemblPlants" id="TraesLAC3B03G01550200.1">
    <property type="protein sequence ID" value="TraesLAC3B03G01550200.1.CDS1"/>
    <property type="gene ID" value="TraesLAC3B03G01550200"/>
</dbReference>
<dbReference type="EnsemblPlants" id="TraesLAC5B03G02899910.1">
    <property type="protein sequence ID" value="TraesLAC5B03G02899910.1.CDS1"/>
    <property type="gene ID" value="TraesLAC5B03G02899910"/>
</dbReference>
<dbReference type="EnsemblPlants" id="TraesLAC5B03G02899990.1">
    <property type="protein sequence ID" value="TraesLAC5B03G02899990.1.CDS1"/>
    <property type="gene ID" value="TraesLAC5B03G02899990"/>
</dbReference>
<dbReference type="EnsemblPlants" id="TraesLAC5D03G03189580.1">
    <property type="protein sequence ID" value="TraesLAC5D03G03189580.1.CDS1"/>
    <property type="gene ID" value="TraesLAC5D03G03189580"/>
</dbReference>
<dbReference type="EnsemblPlants" id="TraesLAC7A03G03755980.1">
    <property type="protein sequence ID" value="TraesLAC7A03G03755980.1.CDS1"/>
    <property type="gene ID" value="TraesLAC7A03G03755980"/>
</dbReference>
<dbReference type="EnsemblPlants" id="TraesLDM1B03G00405100.1">
    <property type="protein sequence ID" value="TraesLDM1B03G00405100.1.CDS1"/>
    <property type="gene ID" value="TraesLDM1B03G00405100"/>
</dbReference>
<dbReference type="EnsemblPlants" id="TraesLDM3B03G01608740.1">
    <property type="protein sequence ID" value="TraesLDM3B03G01608740.1.CDS1"/>
    <property type="gene ID" value="TraesLDM3B03G01608740"/>
</dbReference>
<dbReference type="EnsemblPlants" id="TraesLDM5B03G02948580.1">
    <property type="protein sequence ID" value="TraesLDM5B03G02948580.1.CDS1"/>
    <property type="gene ID" value="TraesLDM5B03G02948580"/>
</dbReference>
<dbReference type="EnsemblPlants" id="TraesMAC1B03G00194310.1">
    <property type="protein sequence ID" value="TraesMAC1B03G00194310.1.CDS1"/>
    <property type="gene ID" value="TraesMAC1B03G00194310"/>
</dbReference>
<dbReference type="EnsemblPlants" id="TraesMAC1B03G00397790.1">
    <property type="protein sequence ID" value="TraesMAC1B03G00397790.1.CDS1"/>
    <property type="gene ID" value="TraesMAC1B03G00397790"/>
</dbReference>
<dbReference type="EnsemblPlants" id="TraesMAC3B03G01607860.1">
    <property type="protein sequence ID" value="TraesMAC3B03G01607860.1.CDS1"/>
    <property type="gene ID" value="TraesMAC3B03G01607860"/>
</dbReference>
<dbReference type="EnsemblPlants" id="TraesMAC5D03G03233660.1">
    <property type="protein sequence ID" value="TraesMAC5D03G03233660.1.CDS1"/>
    <property type="gene ID" value="TraesMAC5D03G03233660"/>
</dbReference>
<dbReference type="EnsemblPlants" id="TraesMACUn03G04631990.1">
    <property type="protein sequence ID" value="TraesMACUn03G04631990.1.CDS1"/>
    <property type="gene ID" value="TraesMACUn03G04631990"/>
</dbReference>
<dbReference type="EnsemblPlants" id="TraesNOR1B03G00409890.1">
    <property type="protein sequence ID" value="TraesNOR1B03G00409890.1.CDS1"/>
    <property type="gene ID" value="TraesNOR1B03G00409890"/>
</dbReference>
<dbReference type="EnsemblPlants" id="TraesNOR1B03G00409910.1">
    <property type="protein sequence ID" value="TraesNOR1B03G00409910.1.CDS1"/>
    <property type="gene ID" value="TraesNOR1B03G00409910"/>
</dbReference>
<dbReference type="EnsemblPlants" id="TraesNOR2A03G00751430.1">
    <property type="protein sequence ID" value="TraesNOR2A03G00751430.1.CDS1"/>
    <property type="gene ID" value="TraesNOR2A03G00751430"/>
</dbReference>
<dbReference type="EnsemblPlants" id="TraesPARA_EIv1.0_0086380.1">
    <property type="protein sequence ID" value="TraesPARA_EIv1.0_0086380.1.CDS1"/>
    <property type="gene ID" value="TraesPARA_EIv1.0_0086380"/>
</dbReference>
<dbReference type="EnsemblPlants" id="TraesPARA_EIv1.0_0086410.1">
    <property type="protein sequence ID" value="TraesPARA_EIv1.0_0086410.1.CDS1"/>
    <property type="gene ID" value="TraesPARA_EIv1.0_0086410"/>
</dbReference>
<dbReference type="EnsemblPlants" id="TraesPARA_EIv1.0_0377110.1">
    <property type="protein sequence ID" value="TraesPARA_EIv1.0_0377110.1.CDS1"/>
    <property type="gene ID" value="TraesPARA_EIv1.0_0377110"/>
</dbReference>
<dbReference type="EnsemblPlants" id="TraesPARA_EIv1.0_0593220.1">
    <property type="protein sequence ID" value="TraesPARA_EIv1.0_0593220.1.CDS1"/>
    <property type="gene ID" value="TraesPARA_EIv1.0_0593220"/>
</dbReference>
<dbReference type="EnsemblPlants" id="TraesPARA_EIv1.0_0593300.1">
    <property type="protein sequence ID" value="TraesPARA_EIv1.0_0593300.1.CDS1"/>
    <property type="gene ID" value="TraesPARA_EIv1.0_0593300"/>
</dbReference>
<dbReference type="EnsemblPlants" id="TraesPARA_EIv1.0_1003200.1">
    <property type="protein sequence ID" value="TraesPARA_EIv1.0_1003200.1.CDS1"/>
    <property type="gene ID" value="TraesPARA_EIv1.0_1003200"/>
</dbReference>
<dbReference type="EnsemblPlants" id="TraesPARA_EIv1.0_1713680.1">
    <property type="protein sequence ID" value="TraesPARA_EIv1.0_1713680.1.CDS1"/>
    <property type="gene ID" value="TraesPARA_EIv1.0_1713680"/>
</dbReference>
<dbReference type="EnsemblPlants" id="TraesPARA_EIv1.0_1887850.1">
    <property type="protein sequence ID" value="TraesPARA_EIv1.0_1887850.1.CDS1"/>
    <property type="gene ID" value="TraesPARA_EIv1.0_1887850"/>
</dbReference>
<dbReference type="EnsemblPlants" id="TraesPARA_EIv1.0_2657420.1">
    <property type="protein sequence ID" value="TraesPARA_EIv1.0_2657420.1.CDS1"/>
    <property type="gene ID" value="TraesPARA_EIv1.0_2657420"/>
</dbReference>
<dbReference type="EnsemblPlants" id="TraesPARA_EIv1.0_2672160.1">
    <property type="protein sequence ID" value="TraesPARA_EIv1.0_2672160.1.CDS1"/>
    <property type="gene ID" value="TraesPARA_EIv1.0_2672160"/>
</dbReference>
<dbReference type="EnsemblPlants" id="TraesPARA_EIv1.0_2679570.1">
    <property type="protein sequence ID" value="TraesPARA_EIv1.0_2679570.1.CDS1"/>
    <property type="gene ID" value="TraesPARA_EIv1.0_2679570"/>
</dbReference>
<dbReference type="EnsemblPlants" id="TraesRN2B0100843700.1">
    <property type="protein sequence ID" value="TraesRN2B0100843700.1"/>
    <property type="gene ID" value="TraesRN2B0100843700"/>
</dbReference>
<dbReference type="EnsemblPlants" id="TraesSTA1B03G00397990.1">
    <property type="protein sequence ID" value="TraesSTA1B03G00397990.1.CDS1"/>
    <property type="gene ID" value="TraesSTA1B03G00397990"/>
</dbReference>
<dbReference type="EnsemblPlants" id="TraesSTA1B03G00402200.1">
    <property type="protein sequence ID" value="TraesSTA1B03G00402200.1.CDS1"/>
    <property type="gene ID" value="TraesSTA1B03G00402200"/>
</dbReference>
<dbReference type="EnsemblPlants" id="TraesSTA3B03G01599690.1">
    <property type="protein sequence ID" value="TraesSTA3B03G01599690.1.CDS1"/>
    <property type="gene ID" value="TraesSTA3B03G01599690"/>
</dbReference>
<dbReference type="EnsemblPlants" id="TraesSTA5B03G02909790.1">
    <property type="protein sequence ID" value="TraesSTA5B03G02909790.1.CDS1"/>
    <property type="gene ID" value="TraesSTA5B03G02909790"/>
</dbReference>
<dbReference type="EnsemblPlants" id="TraesSYM1B03G00407810.1">
    <property type="protein sequence ID" value="TraesSYM1B03G00407810.1.CDS1"/>
    <property type="gene ID" value="TraesSYM1B03G00407810"/>
</dbReference>
<dbReference type="EnsemblPlants" id="TraesSYM2B03G00852690.1">
    <property type="protein sequence ID" value="TraesSYM2B03G00852690.1.CDS1"/>
    <property type="gene ID" value="TraesSYM2B03G00852690"/>
</dbReference>
<dbReference type="EnsemblPlants" id="TraesSYM3B03G01630970.1">
    <property type="protein sequence ID" value="TraesSYM3B03G01630970.1.CDS1"/>
    <property type="gene ID" value="TraesSYM3B03G01630970"/>
</dbReference>
<dbReference type="EnsemblPlants" id="TraesSYM6A03G03207740.1">
    <property type="protein sequence ID" value="TraesSYM6A03G03207740.1.CDS1"/>
    <property type="gene ID" value="TraesSYM6A03G03207740"/>
</dbReference>
<dbReference type="EnsemblPlants" id="TraesSYM7A03G03751260.1">
    <property type="protein sequence ID" value="TraesSYM7A03G03751260.1.CDS1"/>
    <property type="gene ID" value="TraesSYM7A03G03751260"/>
</dbReference>
<dbReference type="EnsemblPlants" id="TraesSYM7B03G04102120.1">
    <property type="protein sequence ID" value="TraesSYM7B03G04102120.1.CDS1"/>
    <property type="gene ID" value="TraesSYM7B03G04102120"/>
</dbReference>
<dbReference type="Gramene" id="TraesARI1B03G00406450.1">
    <property type="protein sequence ID" value="TraesARI1B03G00406450.1.CDS1"/>
    <property type="gene ID" value="TraesARI1B03G00406450"/>
</dbReference>
<dbReference type="Gramene" id="TraesARI3B03G01635580.1">
    <property type="protein sequence ID" value="TraesARI3B03G01635580.1.CDS1"/>
    <property type="gene ID" value="TraesARI3B03G01635580"/>
</dbReference>
<dbReference type="Gramene" id="TraesJAG1B03G00402470.1">
    <property type="protein sequence ID" value="TraesJAG1B03G00402470.1.CDS1"/>
    <property type="gene ID" value="TraesJAG1B03G00402470"/>
</dbReference>
<dbReference type="Gramene" id="TraesJAG2A03G00741750.1">
    <property type="protein sequence ID" value="TraesJAG2A03G00741750.1.CDS1"/>
    <property type="gene ID" value="TraesJAG2A03G00741750"/>
</dbReference>
<dbReference type="Gramene" id="TraesJAG3B03G01617270.1">
    <property type="protein sequence ID" value="TraesJAG3B03G01617270.1.CDS1"/>
    <property type="gene ID" value="TraesJAG3B03G01617270"/>
</dbReference>
<dbReference type="Gramene" id="TraesJUL1B03G00404010.1">
    <property type="protein sequence ID" value="TraesJUL1B03G00404010.1.CDS1"/>
    <property type="gene ID" value="TraesJUL1B03G00404010"/>
</dbReference>
<dbReference type="Gramene" id="TraesJUL2A03G00746560.1">
    <property type="protein sequence ID" value="TraesJUL2A03G00746560.1.CDS1"/>
    <property type="gene ID" value="TraesJUL2A03G00746560"/>
</dbReference>
<dbReference type="Gramene" id="TraesJUL2B03G00847460.1">
    <property type="protein sequence ID" value="TraesJUL2B03G00847460.1.CDS1"/>
    <property type="gene ID" value="TraesJUL2B03G00847460"/>
</dbReference>
<dbReference type="Gramene" id="TraesJUL3B03G01621330.1">
    <property type="protein sequence ID" value="TraesJUL3B03G01621330.1.CDS1"/>
    <property type="gene ID" value="TraesJUL3B03G01621330"/>
</dbReference>
<dbReference type="Gramene" id="TraesJUL4D03G02476900.1">
    <property type="protein sequence ID" value="TraesJUL4D03G02476900.1.CDS1"/>
    <property type="gene ID" value="TraesJUL4D03G02476900"/>
</dbReference>
<dbReference type="Gramene" id="TraesJUL4D03G02476920.1">
    <property type="protein sequence ID" value="TraesJUL4D03G02476920.1.CDS1"/>
    <property type="gene ID" value="TraesJUL4D03G02476920"/>
</dbReference>
<dbReference type="Gramene" id="TraesJUL5D03G03259720.1">
    <property type="protein sequence ID" value="TraesJUL5D03G03259720.1.CDS1"/>
    <property type="gene ID" value="TraesJUL5D03G03259720"/>
</dbReference>
<dbReference type="Gramene" id="TraesJUL6A03G03293580.1">
    <property type="protein sequence ID" value="TraesJUL6A03G03293580.1.CDS1"/>
    <property type="gene ID" value="TraesJUL6A03G03293580"/>
</dbReference>
<dbReference type="Gramene" id="TraesJUL7A03G03842350.1">
    <property type="protein sequence ID" value="TraesJUL7A03G03842350.1.CDS1"/>
    <property type="gene ID" value="TraesJUL7A03G03842350"/>
</dbReference>
<dbReference type="Gramene" id="TraesKAR1A01G0040360.1">
    <property type="protein sequence ID" value="cds.TraesKAR1A01G0040360.1"/>
    <property type="gene ID" value="TraesKAR1A01G0040360"/>
</dbReference>
<dbReference type="Gramene" id="TraesKAR1A01G0040410.1">
    <property type="protein sequence ID" value="cds.TraesKAR1A01G0040410.1"/>
    <property type="gene ID" value="TraesKAR1A01G0040410"/>
</dbReference>
<dbReference type="Gramene" id="TraesKAR1B01G0452290.1">
    <property type="protein sequence ID" value="cds.TraesKAR1B01G0452290.1"/>
    <property type="gene ID" value="TraesKAR1B01G0452290"/>
</dbReference>
<dbReference type="Gramene" id="TraesKAR1B01G0460400.1">
    <property type="protein sequence ID" value="cds.TraesKAR1B01G0460400.1"/>
    <property type="gene ID" value="TraesKAR1B01G0460400"/>
</dbReference>
<dbReference type="Gramene" id="TraesKAR3B01G0143870.1">
    <property type="protein sequence ID" value="cds.TraesKAR3B01G0143870.1"/>
    <property type="gene ID" value="TraesKAR3B01G0143870"/>
</dbReference>
<dbReference type="Gramene" id="TraesKAR4D01G0091690.1">
    <property type="protein sequence ID" value="cds.TraesKAR4D01G0091690.1"/>
    <property type="gene ID" value="TraesKAR4D01G0091690"/>
</dbReference>
<dbReference type="Gramene" id="TraesKAR5B01G0349100.1">
    <property type="protein sequence ID" value="cds.TraesKAR5B01G0349100.1"/>
    <property type="gene ID" value="TraesKAR5B01G0349100"/>
</dbReference>
<dbReference type="Gramene" id="TraesKAR5D01G0413780.1">
    <property type="protein sequence ID" value="cds.TraesKAR5D01G0413780.1"/>
    <property type="gene ID" value="TraesKAR5D01G0413780"/>
</dbReference>
<dbReference type="Gramene" id="TraesKAR6A01G0335690.1">
    <property type="protein sequence ID" value="cds.TraesKAR6A01G0335690.1"/>
    <property type="gene ID" value="TraesKAR6A01G0335690"/>
</dbReference>
<dbReference type="Gramene" id="TraesKARUn01G0024160.1">
    <property type="protein sequence ID" value="cds.TraesKARUn01G0024160.1"/>
    <property type="gene ID" value="TraesKARUn01G0024160"/>
</dbReference>
<dbReference type="Gramene" id="TraesKARUn01G0024280.1">
    <property type="protein sequence ID" value="cds.TraesKARUn01G0024280.1"/>
    <property type="gene ID" value="TraesKARUn01G0024280"/>
</dbReference>
<dbReference type="Gramene" id="TraesKARUn01G0024300.1">
    <property type="protein sequence ID" value="cds.TraesKARUn01G0024300.1"/>
    <property type="gene ID" value="TraesKARUn01G0024300"/>
</dbReference>
<dbReference type="Gramene" id="TraesKARUn01G0030920.1">
    <property type="protein sequence ID" value="cds.TraesKARUn01G0030920.1"/>
    <property type="gene ID" value="TraesKARUn01G0030920"/>
</dbReference>
<dbReference type="Gramene" id="TraesKARUn01G0065280.1">
    <property type="protein sequence ID" value="cds.TraesKARUn01G0065280.1"/>
    <property type="gene ID" value="TraesKARUn01G0065280"/>
</dbReference>
<dbReference type="Gramene" id="TraesKARUn01G0065950.1">
    <property type="protein sequence ID" value="cds.TraesKARUn01G0065950.1"/>
    <property type="gene ID" value="TraesKARUn01G0065950"/>
</dbReference>
<dbReference type="Gramene" id="TraesKARUn01G0067820.1">
    <property type="protein sequence ID" value="cds.TraesKARUn01G0067820.1"/>
    <property type="gene ID" value="TraesKARUn01G0067820"/>
</dbReference>
<dbReference type="Gramene" id="TraesKARUn01G0099010.1">
    <property type="protein sequence ID" value="cds.TraesKARUn01G0099010.1"/>
    <property type="gene ID" value="TraesKARUn01G0099010"/>
</dbReference>
<dbReference type="Gramene" id="TraesKARUn01G0100230.1">
    <property type="protein sequence ID" value="cds.TraesKARUn01G0100230.1"/>
    <property type="gene ID" value="TraesKARUn01G0100230"/>
</dbReference>
<dbReference type="Gramene" id="TraesKARUn01G0100720.1">
    <property type="protein sequence ID" value="cds.TraesKARUn01G0100720.1"/>
    <property type="gene ID" value="TraesKARUn01G0100720"/>
</dbReference>
<dbReference type="Gramene" id="TraesKARUn01G0120770.1">
    <property type="protein sequence ID" value="cds.TraesKARUn01G0120770.1"/>
    <property type="gene ID" value="TraesKARUn01G0120770"/>
</dbReference>
<dbReference type="Gramene" id="TraesKARUn01G0127670.1">
    <property type="protein sequence ID" value="cds.TraesKARUn01G0127670.1"/>
    <property type="gene ID" value="TraesKARUn01G0127670"/>
</dbReference>
<dbReference type="Gramene" id="TraesKARUn01G0130850.1">
    <property type="protein sequence ID" value="cds.TraesKARUn01G0130850.1"/>
    <property type="gene ID" value="TraesKARUn01G0130850"/>
</dbReference>
<dbReference type="Gramene" id="TraesKARUn01G0133990.1">
    <property type="protein sequence ID" value="cds.TraesKARUn01G0133990.1"/>
    <property type="gene ID" value="TraesKARUn01G0133990"/>
</dbReference>
<dbReference type="Gramene" id="TraesKARUn01G0141340.1">
    <property type="protein sequence ID" value="cds.TraesKARUn01G0141340.1"/>
    <property type="gene ID" value="TraesKARUn01G0141340"/>
</dbReference>
<dbReference type="Gramene" id="TraesKARUn01G0151270.1">
    <property type="protein sequence ID" value="cds.TraesKARUn01G0151270.1"/>
    <property type="gene ID" value="TraesKARUn01G0151270"/>
</dbReference>
<dbReference type="Gramene" id="TraesKARUn01G0151550.1">
    <property type="protein sequence ID" value="cds.TraesKARUn01G0151550.1"/>
    <property type="gene ID" value="TraesKARUn01G0151550"/>
</dbReference>
<dbReference type="Gramene" id="TraesKARUn01G0188240.1">
    <property type="protein sequence ID" value="cds.TraesKARUn01G0188240.1"/>
    <property type="gene ID" value="TraesKARUn01G0188240"/>
</dbReference>
<dbReference type="Gramene" id="TraesLAC1B03G00402760.1">
    <property type="protein sequence ID" value="TraesLAC1B03G00402760.1.CDS1"/>
    <property type="gene ID" value="TraesLAC1B03G00402760"/>
</dbReference>
<dbReference type="Gramene" id="TraesLAC1B03G00404600.1">
    <property type="protein sequence ID" value="TraesLAC1B03G00404600.1.CDS1"/>
    <property type="gene ID" value="TraesLAC1B03G00404600"/>
</dbReference>
<dbReference type="Gramene" id="TraesLAC3B03G01550200.1">
    <property type="protein sequence ID" value="TraesLAC3B03G01550200.1.CDS1"/>
    <property type="gene ID" value="TraesLAC3B03G01550200"/>
</dbReference>
<dbReference type="Gramene" id="TraesLAC5B03G02899910.1">
    <property type="protein sequence ID" value="TraesLAC5B03G02899910.1.CDS1"/>
    <property type="gene ID" value="TraesLAC5B03G02899910"/>
</dbReference>
<dbReference type="Gramene" id="TraesLAC5B03G02899990.1">
    <property type="protein sequence ID" value="TraesLAC5B03G02899990.1.CDS1"/>
    <property type="gene ID" value="TraesLAC5B03G02899990"/>
</dbReference>
<dbReference type="Gramene" id="TraesLAC5D03G03189580.1">
    <property type="protein sequence ID" value="TraesLAC5D03G03189580.1.CDS1"/>
    <property type="gene ID" value="TraesLAC5D03G03189580"/>
</dbReference>
<dbReference type="Gramene" id="TraesLAC7A03G03755980.1">
    <property type="protein sequence ID" value="TraesLAC7A03G03755980.1.CDS1"/>
    <property type="gene ID" value="TraesLAC7A03G03755980"/>
</dbReference>
<dbReference type="Gramene" id="TraesLDM1B03G00405100.1">
    <property type="protein sequence ID" value="TraesLDM1B03G00405100.1.CDS1"/>
    <property type="gene ID" value="TraesLDM1B03G00405100"/>
</dbReference>
<dbReference type="Gramene" id="TraesLDM3B03G01608740.1">
    <property type="protein sequence ID" value="TraesLDM3B03G01608740.1.CDS1"/>
    <property type="gene ID" value="TraesLDM3B03G01608740"/>
</dbReference>
<dbReference type="Gramene" id="TraesLDM5B03G02948580.1">
    <property type="protein sequence ID" value="TraesLDM5B03G02948580.1.CDS1"/>
    <property type="gene ID" value="TraesLDM5B03G02948580"/>
</dbReference>
<dbReference type="Gramene" id="TraesMAC1B03G00194310.1">
    <property type="protein sequence ID" value="TraesMAC1B03G00194310.1.CDS1"/>
    <property type="gene ID" value="TraesMAC1B03G00194310"/>
</dbReference>
<dbReference type="Gramene" id="TraesMAC1B03G00397790.1">
    <property type="protein sequence ID" value="TraesMAC1B03G00397790.1.CDS1"/>
    <property type="gene ID" value="TraesMAC1B03G00397790"/>
</dbReference>
<dbReference type="Gramene" id="TraesMAC3B03G01607860.1">
    <property type="protein sequence ID" value="TraesMAC3B03G01607860.1.CDS1"/>
    <property type="gene ID" value="TraesMAC3B03G01607860"/>
</dbReference>
<dbReference type="Gramene" id="TraesMAC5D03G03233660.1">
    <property type="protein sequence ID" value="TraesMAC5D03G03233660.1.CDS1"/>
    <property type="gene ID" value="TraesMAC5D03G03233660"/>
</dbReference>
<dbReference type="Gramene" id="TraesMACUn03G04631990.1">
    <property type="protein sequence ID" value="TraesMACUn03G04631990.1.CDS1"/>
    <property type="gene ID" value="TraesMACUn03G04631990"/>
</dbReference>
<dbReference type="Gramene" id="TraesNOR1B03G00409890.1">
    <property type="protein sequence ID" value="TraesNOR1B03G00409890.1.CDS1"/>
    <property type="gene ID" value="TraesNOR1B03G00409890"/>
</dbReference>
<dbReference type="Gramene" id="TraesNOR1B03G00409910.1">
    <property type="protein sequence ID" value="TraesNOR1B03G00409910.1.CDS1"/>
    <property type="gene ID" value="TraesNOR1B03G00409910"/>
</dbReference>
<dbReference type="Gramene" id="TraesNOR2A03G00751430.1">
    <property type="protein sequence ID" value="TraesNOR2A03G00751430.1.CDS1"/>
    <property type="gene ID" value="TraesNOR2A03G00751430"/>
</dbReference>
<dbReference type="Gramene" id="TraesPARA_EIv1.0_0086380.1">
    <property type="protein sequence ID" value="TraesPARA_EIv1.0_0086380.1.CDS1"/>
    <property type="gene ID" value="TraesPARA_EIv1.0_0086380"/>
</dbReference>
<dbReference type="Gramene" id="TraesPARA_EIv1.0_0086410.1">
    <property type="protein sequence ID" value="TraesPARA_EIv1.0_0086410.1.CDS1"/>
    <property type="gene ID" value="TraesPARA_EIv1.0_0086410"/>
</dbReference>
<dbReference type="Gramene" id="TraesPARA_EIv1.0_0377110.1">
    <property type="protein sequence ID" value="TraesPARA_EIv1.0_0377110.1.CDS1"/>
    <property type="gene ID" value="TraesPARA_EIv1.0_0377110"/>
</dbReference>
<dbReference type="Gramene" id="TraesPARA_EIv1.0_0593220.1">
    <property type="protein sequence ID" value="TraesPARA_EIv1.0_0593220.1.CDS1"/>
    <property type="gene ID" value="TraesPARA_EIv1.0_0593220"/>
</dbReference>
<dbReference type="Gramene" id="TraesPARA_EIv1.0_0593300.1">
    <property type="protein sequence ID" value="TraesPARA_EIv1.0_0593300.1.CDS1"/>
    <property type="gene ID" value="TraesPARA_EIv1.0_0593300"/>
</dbReference>
<dbReference type="Gramene" id="TraesPARA_EIv1.0_1003200.1">
    <property type="protein sequence ID" value="TraesPARA_EIv1.0_1003200.1.CDS1"/>
    <property type="gene ID" value="TraesPARA_EIv1.0_1003200"/>
</dbReference>
<dbReference type="Gramene" id="TraesPARA_EIv1.0_1713680.1">
    <property type="protein sequence ID" value="TraesPARA_EIv1.0_1713680.1.CDS1"/>
    <property type="gene ID" value="TraesPARA_EIv1.0_1713680"/>
</dbReference>
<dbReference type="Gramene" id="TraesPARA_EIv1.0_1887850.1">
    <property type="protein sequence ID" value="TraesPARA_EIv1.0_1887850.1.CDS1"/>
    <property type="gene ID" value="TraesPARA_EIv1.0_1887850"/>
</dbReference>
<dbReference type="Gramene" id="TraesPARA_EIv1.0_2657420.1">
    <property type="protein sequence ID" value="TraesPARA_EIv1.0_2657420.1.CDS1"/>
    <property type="gene ID" value="TraesPARA_EIv1.0_2657420"/>
</dbReference>
<dbReference type="Gramene" id="TraesPARA_EIv1.0_2672160.1">
    <property type="protein sequence ID" value="TraesPARA_EIv1.0_2672160.1.CDS1"/>
    <property type="gene ID" value="TraesPARA_EIv1.0_2672160"/>
</dbReference>
<dbReference type="Gramene" id="TraesPARA_EIv1.0_2679570.1">
    <property type="protein sequence ID" value="TraesPARA_EIv1.0_2679570.1.CDS1"/>
    <property type="gene ID" value="TraesPARA_EIv1.0_2679570"/>
</dbReference>
<dbReference type="Gramene" id="TraesRN2B0100843700.1">
    <property type="protein sequence ID" value="TraesRN2B0100843700.1"/>
    <property type="gene ID" value="TraesRN2B0100843700"/>
</dbReference>
<dbReference type="Gramene" id="TraesSTA1B03G00397990.1">
    <property type="protein sequence ID" value="TraesSTA1B03G00397990.1.CDS1"/>
    <property type="gene ID" value="TraesSTA1B03G00397990"/>
</dbReference>
<dbReference type="Gramene" id="TraesSTA1B03G00402200.1">
    <property type="protein sequence ID" value="TraesSTA1B03G00402200.1.CDS1"/>
    <property type="gene ID" value="TraesSTA1B03G00402200"/>
</dbReference>
<dbReference type="Gramene" id="TraesSTA3B03G01599690.1">
    <property type="protein sequence ID" value="TraesSTA3B03G01599690.1.CDS1"/>
    <property type="gene ID" value="TraesSTA3B03G01599690"/>
</dbReference>
<dbReference type="Gramene" id="TraesSTA5B03G02909790.1">
    <property type="protein sequence ID" value="TraesSTA5B03G02909790.1.CDS1"/>
    <property type="gene ID" value="TraesSTA5B03G02909790"/>
</dbReference>
<dbReference type="Gramene" id="TraesSYM1B03G00407810.1">
    <property type="protein sequence ID" value="TraesSYM1B03G00407810.1.CDS1"/>
    <property type="gene ID" value="TraesSYM1B03G00407810"/>
</dbReference>
<dbReference type="Gramene" id="TraesSYM2B03G00852690.1">
    <property type="protein sequence ID" value="TraesSYM2B03G00852690.1.CDS1"/>
    <property type="gene ID" value="TraesSYM2B03G00852690"/>
</dbReference>
<dbReference type="Gramene" id="TraesSYM3B03G01630970.1">
    <property type="protein sequence ID" value="TraesSYM3B03G01630970.1.CDS1"/>
    <property type="gene ID" value="TraesSYM3B03G01630970"/>
</dbReference>
<dbReference type="Gramene" id="TraesSYM6A03G03207740.1">
    <property type="protein sequence ID" value="TraesSYM6A03G03207740.1.CDS1"/>
    <property type="gene ID" value="TraesSYM6A03G03207740"/>
</dbReference>
<dbReference type="Gramene" id="TraesSYM7A03G03751260.1">
    <property type="protein sequence ID" value="TraesSYM7A03G03751260.1.CDS1"/>
    <property type="gene ID" value="TraesSYM7A03G03751260"/>
</dbReference>
<dbReference type="Gramene" id="TraesSYM7B03G04102120.1">
    <property type="protein sequence ID" value="TraesSYM7B03G04102120.1.CDS1"/>
    <property type="gene ID" value="TraesSYM7B03G04102120"/>
</dbReference>
<dbReference type="eggNOG" id="KOG3291">
    <property type="taxonomic scope" value="Eukaryota"/>
</dbReference>
<dbReference type="HOGENOM" id="CLU_072226_1_1_1"/>
<dbReference type="OrthoDB" id="725859at2759"/>
<dbReference type="Proteomes" id="UP000019116">
    <property type="component" value="Unplaced"/>
</dbReference>
<dbReference type="GO" id="GO:0005763">
    <property type="term" value="C:mitochondrial small ribosomal subunit"/>
    <property type="evidence" value="ECO:0007669"/>
    <property type="project" value="InterPro"/>
</dbReference>
<dbReference type="GO" id="GO:0019843">
    <property type="term" value="F:rRNA binding"/>
    <property type="evidence" value="ECO:0007669"/>
    <property type="project" value="UniProtKB-KW"/>
</dbReference>
<dbReference type="GO" id="GO:0003735">
    <property type="term" value="F:structural constituent of ribosome"/>
    <property type="evidence" value="ECO:0007669"/>
    <property type="project" value="InterPro"/>
</dbReference>
<dbReference type="GO" id="GO:0006412">
    <property type="term" value="P:translation"/>
    <property type="evidence" value="ECO:0007669"/>
    <property type="project" value="InterPro"/>
</dbReference>
<dbReference type="CDD" id="cd15484">
    <property type="entry name" value="uS7_plant"/>
    <property type="match status" value="1"/>
</dbReference>
<dbReference type="FunFam" id="1.10.455.10:FF:000005">
    <property type="entry name" value="Ribosomal protein S7"/>
    <property type="match status" value="1"/>
</dbReference>
<dbReference type="Gene3D" id="1.10.455.10">
    <property type="entry name" value="Ribosomal protein S7 domain"/>
    <property type="match status" value="1"/>
</dbReference>
<dbReference type="InterPro" id="IPR000235">
    <property type="entry name" value="Ribosomal_uS7"/>
</dbReference>
<dbReference type="InterPro" id="IPR005717">
    <property type="entry name" value="Ribosomal_uS7_bac/org-type"/>
</dbReference>
<dbReference type="InterPro" id="IPR023798">
    <property type="entry name" value="Ribosomal_uS7_dom"/>
</dbReference>
<dbReference type="InterPro" id="IPR036823">
    <property type="entry name" value="Ribosomal_uS7_dom_sf"/>
</dbReference>
<dbReference type="InterPro" id="IPR034643">
    <property type="entry name" value="RPS7_plant"/>
</dbReference>
<dbReference type="NCBIfam" id="TIGR01029">
    <property type="entry name" value="rpsG_bact"/>
    <property type="match status" value="1"/>
</dbReference>
<dbReference type="PANTHER" id="PTHR11205">
    <property type="entry name" value="RIBOSOMAL PROTEIN S7"/>
    <property type="match status" value="1"/>
</dbReference>
<dbReference type="Pfam" id="PF00177">
    <property type="entry name" value="Ribosomal_S7"/>
    <property type="match status" value="1"/>
</dbReference>
<dbReference type="PIRSF" id="PIRSF002122">
    <property type="entry name" value="RPS7p_RPS7a_RPS5e_RPS7o"/>
    <property type="match status" value="1"/>
</dbReference>
<dbReference type="SUPFAM" id="SSF47973">
    <property type="entry name" value="Ribosomal protein S7"/>
    <property type="match status" value="1"/>
</dbReference>
<dbReference type="PROSITE" id="PS00052">
    <property type="entry name" value="RIBOSOMAL_S7"/>
    <property type="match status" value="1"/>
</dbReference>
<organism>
    <name type="scientific">Triticum aestivum</name>
    <name type="common">Wheat</name>
    <dbReference type="NCBI Taxonomy" id="4565"/>
    <lineage>
        <taxon>Eukaryota</taxon>
        <taxon>Viridiplantae</taxon>
        <taxon>Streptophyta</taxon>
        <taxon>Embryophyta</taxon>
        <taxon>Tracheophyta</taxon>
        <taxon>Spermatophyta</taxon>
        <taxon>Magnoliopsida</taxon>
        <taxon>Liliopsida</taxon>
        <taxon>Poales</taxon>
        <taxon>Poaceae</taxon>
        <taxon>BOP clade</taxon>
        <taxon>Pooideae</taxon>
        <taxon>Triticodae</taxon>
        <taxon>Triticeae</taxon>
        <taxon>Triticinae</taxon>
        <taxon>Triticum</taxon>
    </lineage>
</organism>
<reference key="1">
    <citation type="journal article" date="1993" name="Mol. Gen. Genet.">
        <title>Characterization of the S7 ribosomal protein gene in wheat mitochondria.</title>
        <authorList>
            <person name="Zhuo D."/>
            <person name="Bonen L."/>
        </authorList>
    </citation>
    <scope>NUCLEOTIDE SEQUENCE [GENOMIC DNA]</scope>
    <source>
        <strain>cv. Frederick</strain>
        <tissue>Seed</tissue>
    </source>
</reference>